<dbReference type="EMBL" id="BC099226">
    <property type="protein sequence ID" value="AAH99226.1"/>
    <property type="molecule type" value="mRNA"/>
</dbReference>
<dbReference type="RefSeq" id="NP_001034081.1">
    <property type="nucleotide sequence ID" value="NM_001038992.1"/>
</dbReference>
<dbReference type="RefSeq" id="NP_001034083.1">
    <property type="nucleotide sequence ID" value="NM_001038994.2"/>
</dbReference>
<dbReference type="RefSeq" id="XP_063144051.1">
    <property type="nucleotide sequence ID" value="XM_063287981.1"/>
</dbReference>
<dbReference type="SMR" id="Q4KLG3"/>
<dbReference type="FunCoup" id="Q4KLG3">
    <property type="interactions" value="433"/>
</dbReference>
<dbReference type="STRING" id="10116.ENSRNOP00000009879"/>
<dbReference type="PhosphoSitePlus" id="Q4KLG3"/>
<dbReference type="PaxDb" id="10116-ENSRNOP00000009879"/>
<dbReference type="GeneID" id="362578"/>
<dbReference type="KEGG" id="rno:362578"/>
<dbReference type="AGR" id="RGD:1311232"/>
<dbReference type="CTD" id="374969"/>
<dbReference type="RGD" id="1311232">
    <property type="gene designation" value="Svbp"/>
</dbReference>
<dbReference type="eggNOG" id="ENOG502S99I">
    <property type="taxonomic scope" value="Eukaryota"/>
</dbReference>
<dbReference type="HOGENOM" id="CLU_2830589_0_0_1"/>
<dbReference type="InParanoid" id="Q4KLG3"/>
<dbReference type="OrthoDB" id="10035051at2759"/>
<dbReference type="PRO" id="PR:Q4KLG3"/>
<dbReference type="Proteomes" id="UP000002494">
    <property type="component" value="Chromosome 5"/>
</dbReference>
<dbReference type="Bgee" id="ENSRNOG00000007404">
    <property type="expression patterns" value="Expressed in testis and 20 other cell types or tissues"/>
</dbReference>
<dbReference type="ExpressionAtlas" id="Q4KLG3">
    <property type="expression patterns" value="baseline and differential"/>
</dbReference>
<dbReference type="GO" id="GO:0045177">
    <property type="term" value="C:apical part of cell"/>
    <property type="evidence" value="ECO:0000266"/>
    <property type="project" value="RGD"/>
</dbReference>
<dbReference type="GO" id="GO:0005737">
    <property type="term" value="C:cytoplasm"/>
    <property type="evidence" value="ECO:0007669"/>
    <property type="project" value="UniProtKB-SubCell"/>
</dbReference>
<dbReference type="GO" id="GO:0005856">
    <property type="term" value="C:cytoskeleton"/>
    <property type="evidence" value="ECO:0007669"/>
    <property type="project" value="UniProtKB-SubCell"/>
</dbReference>
<dbReference type="GO" id="GO:0005576">
    <property type="term" value="C:extracellular region"/>
    <property type="evidence" value="ECO:0007669"/>
    <property type="project" value="UniProtKB-SubCell"/>
</dbReference>
<dbReference type="GO" id="GO:0008017">
    <property type="term" value="F:microtubule binding"/>
    <property type="evidence" value="ECO:0000250"/>
    <property type="project" value="UniProtKB"/>
</dbReference>
<dbReference type="GO" id="GO:0016504">
    <property type="term" value="F:peptidase activator activity"/>
    <property type="evidence" value="ECO:0000266"/>
    <property type="project" value="RGD"/>
</dbReference>
<dbReference type="GO" id="GO:0061564">
    <property type="term" value="P:axon development"/>
    <property type="evidence" value="ECO:0000250"/>
    <property type="project" value="UniProtKB"/>
</dbReference>
<dbReference type="GO" id="GO:0007420">
    <property type="term" value="P:brain development"/>
    <property type="evidence" value="ECO:0000266"/>
    <property type="project" value="RGD"/>
</dbReference>
<dbReference type="GO" id="GO:0010596">
    <property type="term" value="P:negative regulation of endothelial cell migration"/>
    <property type="evidence" value="ECO:0000266"/>
    <property type="project" value="RGD"/>
</dbReference>
<dbReference type="GO" id="GO:0031397">
    <property type="term" value="P:negative regulation of protein ubiquitination"/>
    <property type="evidence" value="ECO:0000266"/>
    <property type="project" value="RGD"/>
</dbReference>
<dbReference type="GO" id="GO:0009306">
    <property type="term" value="P:protein secretion"/>
    <property type="evidence" value="ECO:0000266"/>
    <property type="project" value="RGD"/>
</dbReference>
<dbReference type="GO" id="GO:0006508">
    <property type="term" value="P:proteolysis"/>
    <property type="evidence" value="ECO:0000250"/>
    <property type="project" value="UniProtKB"/>
</dbReference>
<dbReference type="GO" id="GO:1905048">
    <property type="term" value="P:regulation of metallopeptidase activity"/>
    <property type="evidence" value="ECO:0000250"/>
    <property type="project" value="UniProtKB"/>
</dbReference>
<dbReference type="InterPro" id="IPR031378">
    <property type="entry name" value="SVBP"/>
</dbReference>
<dbReference type="PANTHER" id="PTHR34762">
    <property type="entry name" value="SMALL VASOHIBIN-BINDING PROTEIN"/>
    <property type="match status" value="1"/>
</dbReference>
<dbReference type="PANTHER" id="PTHR34762:SF1">
    <property type="entry name" value="SMALL VASOHIBIN-BINDING PROTEIN"/>
    <property type="match status" value="1"/>
</dbReference>
<dbReference type="Pfam" id="PF15674">
    <property type="entry name" value="CCDC23"/>
    <property type="match status" value="1"/>
</dbReference>
<name>SVBP_RAT</name>
<accession>Q4KLG3</accession>
<sequence length="66" mass="7836">MDPPARKEKSKVKEPAFRVEKAKQKSAQQELKQRQRAEIYALNRVMTELEQQQFDEFCKQMQPPGE</sequence>
<keyword id="KW-0175">Coiled coil</keyword>
<keyword id="KW-0963">Cytoplasm</keyword>
<keyword id="KW-0206">Cytoskeleton</keyword>
<keyword id="KW-1185">Reference proteome</keyword>
<keyword id="KW-0964">Secreted</keyword>
<proteinExistence type="inferred from homology"/>
<feature type="chain" id="PRO_0000233665" description="Small vasohibin-binding protein">
    <location>
        <begin position="1"/>
        <end position="66"/>
    </location>
</feature>
<feature type="region of interest" description="Disordered" evidence="4">
    <location>
        <begin position="1"/>
        <end position="30"/>
    </location>
</feature>
<feature type="coiled-coil region" evidence="3">
    <location>
        <begin position="5"/>
        <end position="52"/>
    </location>
</feature>
<feature type="compositionally biased region" description="Basic and acidic residues" evidence="4">
    <location>
        <begin position="1"/>
        <end position="23"/>
    </location>
</feature>
<comment type="function">
    <text evidence="1 5">Enhances the tyrosine carboxypeptidase activity of VASH1 and VASH2, thereby promoting the removal of the C-terminal tyrosine residue of alpha-tubulin. Also required to enhance the solubility and secretion of VASH1 and VASH2. Plays a role in axon and excitatory synapse formation (PubMed:30607023).</text>
</comment>
<comment type="subunit">
    <text evidence="1">Interacts with VASH1 and VASH2.</text>
</comment>
<comment type="subcellular location">
    <subcellularLocation>
        <location evidence="2">Cytoplasm</location>
    </subcellularLocation>
    <subcellularLocation>
        <location evidence="2">Secreted</location>
    </subcellularLocation>
    <subcellularLocation>
        <location evidence="1">Cytoplasm</location>
        <location evidence="1">Cytoskeleton</location>
    </subcellularLocation>
    <text evidence="2">Detected both intracellularly and extracellularly. Within cells, localizes mainly to the apical part of the cell.</text>
</comment>
<comment type="similarity">
    <text evidence="6">Belongs to the SVBP family.</text>
</comment>
<reference key="1">
    <citation type="journal article" date="2004" name="Genome Res.">
        <title>The status, quality, and expansion of the NIH full-length cDNA project: the Mammalian Gene Collection (MGC).</title>
        <authorList>
            <consortium name="The MGC Project Team"/>
        </authorList>
    </citation>
    <scope>NUCLEOTIDE SEQUENCE [LARGE SCALE MRNA]</scope>
    <source>
        <tissue>Thymus</tissue>
    </source>
</reference>
<reference key="2">
    <citation type="journal article" date="2019" name="Genet. Med.">
        <title>Loss of function of SVBP leads to autosomal recessive intellectual disability, microcephaly, ataxia, and hypotonia.</title>
        <authorList>
            <person name="Iqbal Z."/>
            <person name="Tawamie H."/>
            <person name="Ba W."/>
            <person name="Reis A."/>
            <person name="Halak B.A."/>
            <person name="Sticht H."/>
            <person name="Uebe S."/>
            <person name="Kasri N.N."/>
            <person name="Riazuddin S."/>
            <person name="van Bokhoven H."/>
            <person name="Abou Jamra R."/>
        </authorList>
    </citation>
    <scope>FUNCTION</scope>
</reference>
<evidence type="ECO:0000250" key="1">
    <source>
        <dbReference type="UniProtKB" id="Q8N300"/>
    </source>
</evidence>
<evidence type="ECO:0000250" key="2">
    <source>
        <dbReference type="UniProtKB" id="Q99LQ4"/>
    </source>
</evidence>
<evidence type="ECO:0000255" key="3"/>
<evidence type="ECO:0000256" key="4">
    <source>
        <dbReference type="SAM" id="MobiDB-lite"/>
    </source>
</evidence>
<evidence type="ECO:0000269" key="5">
    <source>
    </source>
</evidence>
<evidence type="ECO:0000305" key="6"/>
<evidence type="ECO:0000312" key="7">
    <source>
        <dbReference type="RGD" id="1311232"/>
    </source>
</evidence>
<organism>
    <name type="scientific">Rattus norvegicus</name>
    <name type="common">Rat</name>
    <dbReference type="NCBI Taxonomy" id="10116"/>
    <lineage>
        <taxon>Eukaryota</taxon>
        <taxon>Metazoa</taxon>
        <taxon>Chordata</taxon>
        <taxon>Craniata</taxon>
        <taxon>Vertebrata</taxon>
        <taxon>Euteleostomi</taxon>
        <taxon>Mammalia</taxon>
        <taxon>Eutheria</taxon>
        <taxon>Euarchontoglires</taxon>
        <taxon>Glires</taxon>
        <taxon>Rodentia</taxon>
        <taxon>Myomorpha</taxon>
        <taxon>Muroidea</taxon>
        <taxon>Muridae</taxon>
        <taxon>Murinae</taxon>
        <taxon>Rattus</taxon>
    </lineage>
</organism>
<gene>
    <name evidence="1" type="primary">Svbp</name>
    <name evidence="7" type="synonym">Ccdc23</name>
</gene>
<protein>
    <recommendedName>
        <fullName evidence="1">Small vasohibin-binding protein</fullName>
    </recommendedName>
    <alternativeName>
        <fullName evidence="7">Coiled coil domain-containing protein 23</fullName>
    </alternativeName>
</protein>